<gene>
    <name evidence="2" type="primary">rpsL</name>
    <name type="ordered locus">Ctha_1083</name>
</gene>
<sequence length="128" mass="14196">MPTIQQLVRDGRYTKSFKTASPALDRCPQKRGVCTRVYTTTPKKPNSALRKVARVRLSNGIEVTAYIPGEGHNLQEHSIVLIRGGRVKDLPGVRYHIVRGSLDTSGVADRRNGRSKYGAKRPKEGAKK</sequence>
<name>RS12_CHLT3</name>
<feature type="chain" id="PRO_1000194144" description="Small ribosomal subunit protein uS12">
    <location>
        <begin position="1"/>
        <end position="128"/>
    </location>
</feature>
<feature type="region of interest" description="Disordered" evidence="3">
    <location>
        <begin position="101"/>
        <end position="128"/>
    </location>
</feature>
<feature type="modified residue" description="3-methylthioaspartic acid" evidence="1">
    <location>
        <position position="89"/>
    </location>
</feature>
<protein>
    <recommendedName>
        <fullName evidence="2">Small ribosomal subunit protein uS12</fullName>
    </recommendedName>
    <alternativeName>
        <fullName evidence="4">30S ribosomal protein S12</fullName>
    </alternativeName>
</protein>
<reference key="1">
    <citation type="submission" date="2008-06" db="EMBL/GenBank/DDBJ databases">
        <title>Complete sequence of Chloroherpeton thalassium ATCC 35110.</title>
        <authorList>
            <consortium name="US DOE Joint Genome Institute"/>
            <person name="Lucas S."/>
            <person name="Copeland A."/>
            <person name="Lapidus A."/>
            <person name="Glavina del Rio T."/>
            <person name="Dalin E."/>
            <person name="Tice H."/>
            <person name="Bruce D."/>
            <person name="Goodwin L."/>
            <person name="Pitluck S."/>
            <person name="Schmutz J."/>
            <person name="Larimer F."/>
            <person name="Land M."/>
            <person name="Hauser L."/>
            <person name="Kyrpides N."/>
            <person name="Mikhailova N."/>
            <person name="Liu Z."/>
            <person name="Li T."/>
            <person name="Zhao F."/>
            <person name="Overmann J."/>
            <person name="Bryant D.A."/>
            <person name="Richardson P."/>
        </authorList>
    </citation>
    <scope>NUCLEOTIDE SEQUENCE [LARGE SCALE GENOMIC DNA]</scope>
    <source>
        <strain>ATCC 35110 / GB-78</strain>
    </source>
</reference>
<comment type="function">
    <text evidence="2">With S4 and S5 plays an important role in translational accuracy.</text>
</comment>
<comment type="function">
    <text evidence="2">Interacts with and stabilizes bases of the 16S rRNA that are involved in tRNA selection in the A site and with the mRNA backbone. Located at the interface of the 30S and 50S subunits, it traverses the body of the 30S subunit contacting proteins on the other side and probably holding the rRNA structure together. The combined cluster of proteins S8, S12 and S17 appears to hold together the shoulder and platform of the 30S subunit.</text>
</comment>
<comment type="subunit">
    <text evidence="2">Part of the 30S ribosomal subunit. Contacts proteins S8 and S17. May interact with IF1 in the 30S initiation complex.</text>
</comment>
<comment type="similarity">
    <text evidence="2">Belongs to the universal ribosomal protein uS12 family.</text>
</comment>
<organism>
    <name type="scientific">Chloroherpeton thalassium (strain ATCC 35110 / GB-78)</name>
    <dbReference type="NCBI Taxonomy" id="517418"/>
    <lineage>
        <taxon>Bacteria</taxon>
        <taxon>Pseudomonadati</taxon>
        <taxon>Chlorobiota</taxon>
        <taxon>Chlorobiia</taxon>
        <taxon>Chlorobiales</taxon>
        <taxon>Chloroherpetonaceae</taxon>
        <taxon>Chloroherpeton</taxon>
    </lineage>
</organism>
<keyword id="KW-0488">Methylation</keyword>
<keyword id="KW-1185">Reference proteome</keyword>
<keyword id="KW-0687">Ribonucleoprotein</keyword>
<keyword id="KW-0689">Ribosomal protein</keyword>
<keyword id="KW-0694">RNA-binding</keyword>
<keyword id="KW-0699">rRNA-binding</keyword>
<keyword id="KW-0820">tRNA-binding</keyword>
<evidence type="ECO:0000250" key="1"/>
<evidence type="ECO:0000255" key="2">
    <source>
        <dbReference type="HAMAP-Rule" id="MF_00403"/>
    </source>
</evidence>
<evidence type="ECO:0000256" key="3">
    <source>
        <dbReference type="SAM" id="MobiDB-lite"/>
    </source>
</evidence>
<evidence type="ECO:0000305" key="4"/>
<dbReference type="EMBL" id="CP001100">
    <property type="protein sequence ID" value="ACF13547.1"/>
    <property type="molecule type" value="Genomic_DNA"/>
</dbReference>
<dbReference type="RefSeq" id="WP_012499631.1">
    <property type="nucleotide sequence ID" value="NC_011026.1"/>
</dbReference>
<dbReference type="SMR" id="B3QY19"/>
<dbReference type="STRING" id="517418.Ctha_1083"/>
<dbReference type="KEGG" id="cts:Ctha_1083"/>
<dbReference type="eggNOG" id="COG0048">
    <property type="taxonomic scope" value="Bacteria"/>
</dbReference>
<dbReference type="HOGENOM" id="CLU_104295_1_2_10"/>
<dbReference type="OrthoDB" id="9802366at2"/>
<dbReference type="Proteomes" id="UP000001208">
    <property type="component" value="Chromosome"/>
</dbReference>
<dbReference type="GO" id="GO:0015935">
    <property type="term" value="C:small ribosomal subunit"/>
    <property type="evidence" value="ECO:0007669"/>
    <property type="project" value="InterPro"/>
</dbReference>
<dbReference type="GO" id="GO:0019843">
    <property type="term" value="F:rRNA binding"/>
    <property type="evidence" value="ECO:0007669"/>
    <property type="project" value="UniProtKB-UniRule"/>
</dbReference>
<dbReference type="GO" id="GO:0003735">
    <property type="term" value="F:structural constituent of ribosome"/>
    <property type="evidence" value="ECO:0007669"/>
    <property type="project" value="InterPro"/>
</dbReference>
<dbReference type="GO" id="GO:0000049">
    <property type="term" value="F:tRNA binding"/>
    <property type="evidence" value="ECO:0007669"/>
    <property type="project" value="UniProtKB-UniRule"/>
</dbReference>
<dbReference type="GO" id="GO:0006412">
    <property type="term" value="P:translation"/>
    <property type="evidence" value="ECO:0007669"/>
    <property type="project" value="UniProtKB-UniRule"/>
</dbReference>
<dbReference type="CDD" id="cd03368">
    <property type="entry name" value="Ribosomal_S12"/>
    <property type="match status" value="1"/>
</dbReference>
<dbReference type="FunFam" id="2.40.50.140:FF:000001">
    <property type="entry name" value="30S ribosomal protein S12"/>
    <property type="match status" value="1"/>
</dbReference>
<dbReference type="Gene3D" id="2.40.50.140">
    <property type="entry name" value="Nucleic acid-binding proteins"/>
    <property type="match status" value="1"/>
</dbReference>
<dbReference type="HAMAP" id="MF_00403_B">
    <property type="entry name" value="Ribosomal_uS12_B"/>
    <property type="match status" value="1"/>
</dbReference>
<dbReference type="InterPro" id="IPR012340">
    <property type="entry name" value="NA-bd_OB-fold"/>
</dbReference>
<dbReference type="InterPro" id="IPR006032">
    <property type="entry name" value="Ribosomal_uS12"/>
</dbReference>
<dbReference type="InterPro" id="IPR005679">
    <property type="entry name" value="Ribosomal_uS12_bac"/>
</dbReference>
<dbReference type="NCBIfam" id="TIGR00981">
    <property type="entry name" value="rpsL_bact"/>
    <property type="match status" value="1"/>
</dbReference>
<dbReference type="PANTHER" id="PTHR11652">
    <property type="entry name" value="30S RIBOSOMAL PROTEIN S12 FAMILY MEMBER"/>
    <property type="match status" value="1"/>
</dbReference>
<dbReference type="Pfam" id="PF00164">
    <property type="entry name" value="Ribosom_S12_S23"/>
    <property type="match status" value="1"/>
</dbReference>
<dbReference type="PIRSF" id="PIRSF002133">
    <property type="entry name" value="Ribosomal_S12/S23"/>
    <property type="match status" value="1"/>
</dbReference>
<dbReference type="PRINTS" id="PR01034">
    <property type="entry name" value="RIBOSOMALS12"/>
</dbReference>
<dbReference type="SUPFAM" id="SSF50249">
    <property type="entry name" value="Nucleic acid-binding proteins"/>
    <property type="match status" value="1"/>
</dbReference>
<dbReference type="PROSITE" id="PS00055">
    <property type="entry name" value="RIBOSOMAL_S12"/>
    <property type="match status" value="1"/>
</dbReference>
<proteinExistence type="inferred from homology"/>
<accession>B3QY19</accession>